<keyword id="KW-0963">Cytoplasm</keyword>
<keyword id="KW-0217">Developmental protein</keyword>
<keyword id="KW-1017">Isopeptide bond</keyword>
<keyword id="KW-0539">Nucleus</keyword>
<keyword id="KW-1185">Reference proteome</keyword>
<keyword id="KW-0833">Ubl conjugation pathway</keyword>
<organism>
    <name type="scientific">Caenorhabditis elegans</name>
    <dbReference type="NCBI Taxonomy" id="6239"/>
    <lineage>
        <taxon>Eukaryota</taxon>
        <taxon>Metazoa</taxon>
        <taxon>Ecdysozoa</taxon>
        <taxon>Nematoda</taxon>
        <taxon>Chromadorea</taxon>
        <taxon>Rhabditida</taxon>
        <taxon>Rhabditina</taxon>
        <taxon>Rhabditomorpha</taxon>
        <taxon>Rhabditoidea</taxon>
        <taxon>Rhabditidae</taxon>
        <taxon>Peloderinae</taxon>
        <taxon>Caenorhabditis</taxon>
    </lineage>
</organism>
<protein>
    <recommendedName>
        <fullName>Ubiquitin-like protein NEDD8</fullName>
    </recommendedName>
    <alternativeName>
        <fullName>Neddylin</fullName>
    </alternativeName>
    <alternativeName>
        <fullName>Protein NED-8</fullName>
    </alternativeName>
</protein>
<reference key="1">
    <citation type="journal article" date="1998" name="Science">
        <title>Genome sequence of the nematode C. elegans: a platform for investigating biology.</title>
        <authorList>
            <consortium name="The C. elegans sequencing consortium"/>
        </authorList>
    </citation>
    <scope>NUCLEOTIDE SEQUENCE [LARGE SCALE GENOMIC DNA]</scope>
    <source>
        <strain>Bristol N2</strain>
    </source>
</reference>
<reference key="2">
    <citation type="journal article" date="2000" name="Dev. Biol.">
        <title>The NED-8 conjugating system in Caenorhabditis elegans is required for embryogenesis and terminal differentiation of the hypodermis.</title>
        <authorList>
            <person name="Jones D."/>
            <person name="Candido E.P.M."/>
        </authorList>
    </citation>
    <scope>DEVELOPMENTAL STAGE</scope>
    <scope>FUNCTION</scope>
    <scope>DISRUPTION PHENOTYPE</scope>
</reference>
<reference key="3">
    <citation type="journal article" date="2002" name="Science">
        <title>Cytoskeletal regulation by the Nedd8 ubiquitin-like protein modification pathway.</title>
        <authorList>
            <person name="Kurz T."/>
            <person name="Pintard L."/>
            <person name="Willis J.H."/>
            <person name="Hamill D.R."/>
            <person name="Goenczy P."/>
            <person name="Peter M."/>
            <person name="Bowerman B."/>
        </authorList>
    </citation>
    <scope>SUBCELLULAR LOCATION</scope>
    <scope>FUNCTION</scope>
</reference>
<reference key="4">
    <citation type="journal article" date="2003" name="Curr. Biol.">
        <title>Neddylation and deneddylation of CUL-3 is required to target MEI-1/katanin for degradation at the meiosis-to-mitosis transition in C. elegans.</title>
        <authorList>
            <person name="Pintard L."/>
            <person name="Kurz T."/>
            <person name="Glaser S."/>
            <person name="Willis J.H."/>
            <person name="Peter M."/>
            <person name="Bowerman B."/>
        </authorList>
    </citation>
    <scope>FUNCTION</scope>
    <scope>SUBUNIT</scope>
</reference>
<reference key="5">
    <citation type="journal article" date="2005" name="Nature">
        <title>The conserved protein DCN-1/Dcn1p is required for cullin neddylation in C. elegans and S. cerevisiae.</title>
        <authorList>
            <person name="Kurz T."/>
            <person name="Oezlue N."/>
            <person name="Rudolf F."/>
            <person name="O'Rourke S.M."/>
            <person name="Luke B."/>
            <person name="Hofmann K."/>
            <person name="Hyman A.A."/>
            <person name="Bowerman B."/>
            <person name="Peter M."/>
        </authorList>
    </citation>
    <scope>INTERACTION WITH DCN-1</scope>
</reference>
<reference key="6">
    <citation type="journal article" date="2007" name="Biochim. Biophys. Acta">
        <title>NEDD8: a new ataxin-3 interactor.</title>
        <authorList>
            <person name="Ferro A."/>
            <person name="Carvalho A.L."/>
            <person name="Teixeira-Castro A."/>
            <person name="Almeida C."/>
            <person name="Tome R.J."/>
            <person name="Cortes L."/>
            <person name="Rodrigues A.J."/>
            <person name="Logarinho E."/>
            <person name="Sequeiros J."/>
            <person name="Macedo-Ribeiro S."/>
            <person name="Maciel P."/>
        </authorList>
    </citation>
    <scope>INTERACTION WITH ATX-3</scope>
</reference>
<evidence type="ECO:0000250" key="1">
    <source>
        <dbReference type="UniProtKB" id="Q15843"/>
    </source>
</evidence>
<evidence type="ECO:0000269" key="2">
    <source>
    </source>
</evidence>
<evidence type="ECO:0000269" key="3">
    <source>
    </source>
</evidence>
<evidence type="ECO:0000269" key="4">
    <source>
    </source>
</evidence>
<evidence type="ECO:0000269" key="5">
    <source>
    </source>
</evidence>
<evidence type="ECO:0000269" key="6">
    <source>
    </source>
</evidence>
<evidence type="ECO:0000305" key="7"/>
<sequence length="77" mass="8629">MLIKVKTLTGKEIELDIEPNDRVERIKEKVEEKEGIPPPQQRLIFAGKQMNDDKTAADYKVLGGSVLHLVLALRGGF</sequence>
<comment type="function">
    <text evidence="2 3 4">Ubiquitin-like protein which plays an important role in cell cycle control and embryogenesis. Covalent attachment to its substrates requires prior activation by the E1 complex uba-3-ula-1 and linkage to the E2 enzyme ubc-12. Attachment of ned-8 to cullins activates their associated E3 ubiquitin ligase activity, and thus promotes polyubiquitination and proteasomal degradation of cyclins and other regulatory proteins.</text>
</comment>
<comment type="subunit">
    <text evidence="4 5 6">Interacts with dcn-1 (PubMed:15988528). Covalently attached to cullins (PubMed:12781129). May interact with atx-3 (PubMed:17935801).</text>
</comment>
<comment type="subcellular location">
    <subcellularLocation>
        <location evidence="3">Nucleus</location>
    </subcellularLocation>
    <subcellularLocation>
        <location evidence="3">Cytoplasm</location>
    </subcellularLocation>
    <text>Mainly nuclear during interphase, also cytoplasmic during interphase and mitosis.</text>
</comment>
<comment type="developmental stage">
    <text evidence="2">Expressed throughout development.</text>
</comment>
<comment type="PTM">
    <text evidence="1">Cleavage of precursor form is necessary for function.</text>
</comment>
<comment type="disruption phenotype">
    <text evidence="2">Worms either arrest during embryonic development, or show vulval eversion at the L4 stage and burst at the vulva during the L4-to-adult molt. Those who survive to the adult stage display severe defects in terminal differentiation of seam cells, vulva and male tail.</text>
</comment>
<comment type="similarity">
    <text evidence="7">Belongs to the ubiquitin family.</text>
</comment>
<proteinExistence type="evidence at protein level"/>
<name>NEDD8_CAEEL</name>
<accession>Q93725</accession>
<gene>
    <name type="primary">ned-8</name>
    <name type="ORF">F45H11.2</name>
</gene>
<feature type="chain" id="PRO_0000042777" description="Ubiquitin-like protein NEDD8">
    <location>
        <begin position="1"/>
        <end position="76"/>
    </location>
</feature>
<feature type="propeptide" id="PRO_0000042778" evidence="1">
    <location>
        <position position="77"/>
    </location>
</feature>
<feature type="region of interest" description="Interaction with uba-3" evidence="1">
    <location>
        <begin position="70"/>
        <end position="72"/>
    </location>
</feature>
<feature type="site" description="Interaction with uba-3" evidence="1">
    <location>
        <position position="8"/>
    </location>
</feature>
<feature type="site" description="Interaction with uba-3" evidence="1">
    <location>
        <position position="44"/>
    </location>
</feature>
<feature type="cross-link" description="Glycyl lysine isopeptide (Gly-Lys) (interchain with K-? in acceptor proteins)">
    <location>
        <position position="76"/>
    </location>
</feature>
<dbReference type="EMBL" id="Z78420">
    <property type="protein sequence ID" value="CAB01708.1"/>
    <property type="molecule type" value="Genomic_DNA"/>
</dbReference>
<dbReference type="PIR" id="T22249">
    <property type="entry name" value="T22249"/>
</dbReference>
<dbReference type="RefSeq" id="NP_001379170.1">
    <property type="nucleotide sequence ID" value="NM_001392929.1"/>
</dbReference>
<dbReference type="RefSeq" id="NP_492717.1">
    <property type="nucleotide sequence ID" value="NM_060316.3"/>
</dbReference>
<dbReference type="SMR" id="Q93725"/>
<dbReference type="BioGRID" id="38327">
    <property type="interactions" value="53"/>
</dbReference>
<dbReference type="FunCoup" id="Q93725">
    <property type="interactions" value="3174"/>
</dbReference>
<dbReference type="IntAct" id="Q93725">
    <property type="interactions" value="1"/>
</dbReference>
<dbReference type="STRING" id="6239.F45H11.2.1"/>
<dbReference type="PaxDb" id="6239-F45H11.2"/>
<dbReference type="PeptideAtlas" id="Q93725"/>
<dbReference type="EnsemblMetazoa" id="F45H11.2.1">
    <property type="protein sequence ID" value="F45H11.2.1"/>
    <property type="gene ID" value="WBGene00003587"/>
</dbReference>
<dbReference type="GeneID" id="172910"/>
<dbReference type="UCSC" id="F45H11.2">
    <property type="organism name" value="c. elegans"/>
</dbReference>
<dbReference type="AGR" id="WB:WBGene00003587"/>
<dbReference type="WormBase" id="F45H11.2">
    <property type="protein sequence ID" value="CE10552"/>
    <property type="gene ID" value="WBGene00003587"/>
    <property type="gene designation" value="ned-8"/>
</dbReference>
<dbReference type="eggNOG" id="KOG0005">
    <property type="taxonomic scope" value="Eukaryota"/>
</dbReference>
<dbReference type="GeneTree" id="ENSGT00940000155856"/>
<dbReference type="HOGENOM" id="CLU_010412_6_4_1"/>
<dbReference type="InParanoid" id="Q93725"/>
<dbReference type="OMA" id="YAGKQMA"/>
<dbReference type="OrthoDB" id="428577at2759"/>
<dbReference type="PhylomeDB" id="Q93725"/>
<dbReference type="Reactome" id="R-CEL-5689603">
    <property type="pathway name" value="UCH proteinases"/>
</dbReference>
<dbReference type="Reactome" id="R-CEL-8856825">
    <property type="pathway name" value="Cargo recognition for clathrin-mediated endocytosis"/>
</dbReference>
<dbReference type="Reactome" id="R-CEL-8951664">
    <property type="pathway name" value="Neddylation"/>
</dbReference>
<dbReference type="Reactome" id="R-CEL-917937">
    <property type="pathway name" value="Iron uptake and transport"/>
</dbReference>
<dbReference type="PRO" id="PR:Q93725"/>
<dbReference type="Proteomes" id="UP000001940">
    <property type="component" value="Chromosome I"/>
</dbReference>
<dbReference type="Bgee" id="WBGene00003587">
    <property type="expression patterns" value="Expressed in embryo and 4 other cell types or tissues"/>
</dbReference>
<dbReference type="GO" id="GO:0005737">
    <property type="term" value="C:cytoplasm"/>
    <property type="evidence" value="ECO:0000314"/>
    <property type="project" value="WormBase"/>
</dbReference>
<dbReference type="GO" id="GO:0005634">
    <property type="term" value="C:nucleus"/>
    <property type="evidence" value="ECO:0000314"/>
    <property type="project" value="WormBase"/>
</dbReference>
<dbReference type="GO" id="GO:0031386">
    <property type="term" value="F:protein tag activity"/>
    <property type="evidence" value="ECO:0000318"/>
    <property type="project" value="GO_Central"/>
</dbReference>
<dbReference type="GO" id="GO:0031625">
    <property type="term" value="F:ubiquitin protein ligase binding"/>
    <property type="evidence" value="ECO:0000318"/>
    <property type="project" value="GO_Central"/>
</dbReference>
<dbReference type="GO" id="GO:0019941">
    <property type="term" value="P:modification-dependent protein catabolic process"/>
    <property type="evidence" value="ECO:0000318"/>
    <property type="project" value="GO_Central"/>
</dbReference>
<dbReference type="GO" id="GO:0043066">
    <property type="term" value="P:negative regulation of apoptotic process"/>
    <property type="evidence" value="ECO:0000315"/>
    <property type="project" value="UniProtKB"/>
</dbReference>
<dbReference type="GO" id="GO:0043518">
    <property type="term" value="P:negative regulation of DNA damage response, signal transduction by p53 class mediator"/>
    <property type="evidence" value="ECO:0000315"/>
    <property type="project" value="UniProtKB"/>
</dbReference>
<dbReference type="GO" id="GO:0010629">
    <property type="term" value="P:negative regulation of gene expression"/>
    <property type="evidence" value="ECO:0000315"/>
    <property type="project" value="UniProtKB"/>
</dbReference>
<dbReference type="GO" id="GO:0043065">
    <property type="term" value="P:positive regulation of apoptotic process"/>
    <property type="evidence" value="ECO:0000316"/>
    <property type="project" value="WormBase"/>
</dbReference>
<dbReference type="GO" id="GO:0045116">
    <property type="term" value="P:protein neddylation"/>
    <property type="evidence" value="ECO:0000318"/>
    <property type="project" value="GO_Central"/>
</dbReference>
<dbReference type="GO" id="GO:0030162">
    <property type="term" value="P:regulation of proteolysis"/>
    <property type="evidence" value="ECO:0000318"/>
    <property type="project" value="GO_Central"/>
</dbReference>
<dbReference type="CDD" id="cd01806">
    <property type="entry name" value="Ubl_NEDD8"/>
    <property type="match status" value="1"/>
</dbReference>
<dbReference type="FunFam" id="3.10.20.90:FF:000023">
    <property type="entry name" value="NEDD8 protein"/>
    <property type="match status" value="1"/>
</dbReference>
<dbReference type="Gene3D" id="3.10.20.90">
    <property type="entry name" value="Phosphatidylinositol 3-kinase Catalytic Subunit, Chain A, domain 1"/>
    <property type="match status" value="1"/>
</dbReference>
<dbReference type="InterPro" id="IPR038738">
    <property type="entry name" value="Nedd8-like"/>
</dbReference>
<dbReference type="InterPro" id="IPR000626">
    <property type="entry name" value="Ubiquitin-like_dom"/>
</dbReference>
<dbReference type="InterPro" id="IPR029071">
    <property type="entry name" value="Ubiquitin-like_domsf"/>
</dbReference>
<dbReference type="InterPro" id="IPR019954">
    <property type="entry name" value="Ubiquitin_CS"/>
</dbReference>
<dbReference type="InterPro" id="IPR019956">
    <property type="entry name" value="Ubiquitin_dom"/>
</dbReference>
<dbReference type="InterPro" id="IPR050158">
    <property type="entry name" value="Ubiquitin_ubiquitin-like"/>
</dbReference>
<dbReference type="PANTHER" id="PTHR10666">
    <property type="entry name" value="UBIQUITIN"/>
    <property type="match status" value="1"/>
</dbReference>
<dbReference type="Pfam" id="PF00240">
    <property type="entry name" value="ubiquitin"/>
    <property type="match status" value="1"/>
</dbReference>
<dbReference type="PRINTS" id="PR00348">
    <property type="entry name" value="UBIQUITIN"/>
</dbReference>
<dbReference type="SMART" id="SM00213">
    <property type="entry name" value="UBQ"/>
    <property type="match status" value="1"/>
</dbReference>
<dbReference type="SUPFAM" id="SSF54236">
    <property type="entry name" value="Ubiquitin-like"/>
    <property type="match status" value="1"/>
</dbReference>
<dbReference type="PROSITE" id="PS00299">
    <property type="entry name" value="UBIQUITIN_1"/>
    <property type="match status" value="1"/>
</dbReference>
<dbReference type="PROSITE" id="PS50053">
    <property type="entry name" value="UBIQUITIN_2"/>
    <property type="match status" value="1"/>
</dbReference>